<feature type="chain" id="PRO_1000075239" description="Imidazoleglycerol-phosphate dehydratase">
    <location>
        <begin position="1"/>
        <end position="202"/>
    </location>
</feature>
<evidence type="ECO:0000255" key="1">
    <source>
        <dbReference type="HAMAP-Rule" id="MF_00076"/>
    </source>
</evidence>
<keyword id="KW-0028">Amino-acid biosynthesis</keyword>
<keyword id="KW-0963">Cytoplasm</keyword>
<keyword id="KW-0368">Histidine biosynthesis</keyword>
<keyword id="KW-0456">Lyase</keyword>
<keyword id="KW-1185">Reference proteome</keyword>
<protein>
    <recommendedName>
        <fullName evidence="1">Imidazoleglycerol-phosphate dehydratase</fullName>
        <shortName evidence="1">IGPD</shortName>
        <ecNumber evidence="1">4.2.1.19</ecNumber>
    </recommendedName>
</protein>
<reference key="1">
    <citation type="submission" date="2007-10" db="EMBL/GenBank/DDBJ databases">
        <title>Brucella canis ATCC 23365 whole genome shotgun sequencing project.</title>
        <authorList>
            <person name="Setubal J.C."/>
            <person name="Bowns C."/>
            <person name="Boyle S."/>
            <person name="Crasta O.R."/>
            <person name="Czar M.J."/>
            <person name="Dharmanolla C."/>
            <person name="Gillespie J.J."/>
            <person name="Kenyon R.W."/>
            <person name="Lu J."/>
            <person name="Mane S."/>
            <person name="Mohapatra S."/>
            <person name="Nagrani S."/>
            <person name="Purkayastha A."/>
            <person name="Rajasimha H.K."/>
            <person name="Shallom J.M."/>
            <person name="Shallom S."/>
            <person name="Shukla M."/>
            <person name="Snyder E.E."/>
            <person name="Sobral B.W."/>
            <person name="Wattam A.R."/>
            <person name="Will R."/>
            <person name="Williams K."/>
            <person name="Yoo H."/>
            <person name="Bruce D."/>
            <person name="Detter C."/>
            <person name="Munk C."/>
            <person name="Brettin T.S."/>
        </authorList>
    </citation>
    <scope>NUCLEOTIDE SEQUENCE [LARGE SCALE GENOMIC DNA]</scope>
    <source>
        <strain>ATCC 23365 / NCTC 10854 / RM-666</strain>
    </source>
</reference>
<dbReference type="EC" id="4.2.1.19" evidence="1"/>
<dbReference type="EMBL" id="CP000872">
    <property type="protein sequence ID" value="ABX63110.1"/>
    <property type="molecule type" value="Genomic_DNA"/>
</dbReference>
<dbReference type="RefSeq" id="WP_002967034.1">
    <property type="nucleotide sequence ID" value="NC_010103.1"/>
</dbReference>
<dbReference type="SMR" id="A9M9R5"/>
<dbReference type="GeneID" id="97534656"/>
<dbReference type="KEGG" id="bcs:BCAN_A2127"/>
<dbReference type="HOGENOM" id="CLU_044308_3_0_5"/>
<dbReference type="PhylomeDB" id="A9M9R5"/>
<dbReference type="UniPathway" id="UPA00031">
    <property type="reaction ID" value="UER00011"/>
</dbReference>
<dbReference type="Proteomes" id="UP000001385">
    <property type="component" value="Chromosome I"/>
</dbReference>
<dbReference type="GO" id="GO:0005737">
    <property type="term" value="C:cytoplasm"/>
    <property type="evidence" value="ECO:0007669"/>
    <property type="project" value="UniProtKB-SubCell"/>
</dbReference>
<dbReference type="GO" id="GO:0004424">
    <property type="term" value="F:imidazoleglycerol-phosphate dehydratase activity"/>
    <property type="evidence" value="ECO:0007669"/>
    <property type="project" value="UniProtKB-UniRule"/>
</dbReference>
<dbReference type="GO" id="GO:0000105">
    <property type="term" value="P:L-histidine biosynthetic process"/>
    <property type="evidence" value="ECO:0007669"/>
    <property type="project" value="UniProtKB-UniRule"/>
</dbReference>
<dbReference type="CDD" id="cd07914">
    <property type="entry name" value="IGPD"/>
    <property type="match status" value="1"/>
</dbReference>
<dbReference type="FunFam" id="3.30.230.40:FF:000001">
    <property type="entry name" value="Imidazoleglycerol-phosphate dehydratase HisB"/>
    <property type="match status" value="1"/>
</dbReference>
<dbReference type="FunFam" id="3.30.230.40:FF:000003">
    <property type="entry name" value="Imidazoleglycerol-phosphate dehydratase HisB"/>
    <property type="match status" value="1"/>
</dbReference>
<dbReference type="Gene3D" id="3.30.230.40">
    <property type="entry name" value="Imidazole glycerol phosphate dehydratase, domain 1"/>
    <property type="match status" value="2"/>
</dbReference>
<dbReference type="HAMAP" id="MF_00076">
    <property type="entry name" value="HisB"/>
    <property type="match status" value="1"/>
</dbReference>
<dbReference type="InterPro" id="IPR038494">
    <property type="entry name" value="IGPD_sf"/>
</dbReference>
<dbReference type="InterPro" id="IPR000807">
    <property type="entry name" value="ImidazoleglycerolP_deHydtase"/>
</dbReference>
<dbReference type="InterPro" id="IPR020565">
    <property type="entry name" value="ImidazoleglycerP_deHydtase_CS"/>
</dbReference>
<dbReference type="InterPro" id="IPR020568">
    <property type="entry name" value="Ribosomal_Su5_D2-typ_SF"/>
</dbReference>
<dbReference type="NCBIfam" id="NF002109">
    <property type="entry name" value="PRK00951.1-5"/>
    <property type="match status" value="1"/>
</dbReference>
<dbReference type="NCBIfam" id="NF002111">
    <property type="entry name" value="PRK00951.2-1"/>
    <property type="match status" value="1"/>
</dbReference>
<dbReference type="NCBIfam" id="NF002114">
    <property type="entry name" value="PRK00951.2-4"/>
    <property type="match status" value="1"/>
</dbReference>
<dbReference type="PANTHER" id="PTHR23133:SF2">
    <property type="entry name" value="IMIDAZOLEGLYCEROL-PHOSPHATE DEHYDRATASE"/>
    <property type="match status" value="1"/>
</dbReference>
<dbReference type="PANTHER" id="PTHR23133">
    <property type="entry name" value="IMIDAZOLEGLYCEROL-PHOSPHATE DEHYDRATASE HIS7"/>
    <property type="match status" value="1"/>
</dbReference>
<dbReference type="Pfam" id="PF00475">
    <property type="entry name" value="IGPD"/>
    <property type="match status" value="1"/>
</dbReference>
<dbReference type="SUPFAM" id="SSF54211">
    <property type="entry name" value="Ribosomal protein S5 domain 2-like"/>
    <property type="match status" value="2"/>
</dbReference>
<dbReference type="PROSITE" id="PS00954">
    <property type="entry name" value="IGP_DEHYDRATASE_1"/>
    <property type="match status" value="1"/>
</dbReference>
<dbReference type="PROSITE" id="PS00955">
    <property type="entry name" value="IGP_DEHYDRATASE_2"/>
    <property type="match status" value="1"/>
</dbReference>
<sequence>MTAESTRKASIERSTKETSIAVSVDLDGVGKFDITTGVGFFDHMLEQLSRHSLIDMRVMAKGDLHIDDHHTVEDTGIALGQAVAKALGERRGIVRYASLDLAMDDTLTGAAVDVSGRAFLVWNVNFTTAKIGTFDTELVREFFQAFAMNAGITLHINNHYGANNHHIAESTFKAVARVLRAALETDPRQKDAIPSTKGSLKG</sequence>
<gene>
    <name evidence="1" type="primary">hisB</name>
    <name type="ordered locus">BCAN_A2127</name>
</gene>
<name>HIS7_BRUC2</name>
<comment type="catalytic activity">
    <reaction evidence="1">
        <text>D-erythro-1-(imidazol-4-yl)glycerol 3-phosphate = 3-(imidazol-4-yl)-2-oxopropyl phosphate + H2O</text>
        <dbReference type="Rhea" id="RHEA:11040"/>
        <dbReference type="ChEBI" id="CHEBI:15377"/>
        <dbReference type="ChEBI" id="CHEBI:57766"/>
        <dbReference type="ChEBI" id="CHEBI:58278"/>
        <dbReference type="EC" id="4.2.1.19"/>
    </reaction>
</comment>
<comment type="pathway">
    <text evidence="1">Amino-acid biosynthesis; L-histidine biosynthesis; L-histidine from 5-phospho-alpha-D-ribose 1-diphosphate: step 6/9.</text>
</comment>
<comment type="subcellular location">
    <subcellularLocation>
        <location evidence="1">Cytoplasm</location>
    </subcellularLocation>
</comment>
<comment type="similarity">
    <text evidence="1">Belongs to the imidazoleglycerol-phosphate dehydratase family.</text>
</comment>
<organism>
    <name type="scientific">Brucella canis (strain ATCC 23365 / NCTC 10854 / RM-666)</name>
    <dbReference type="NCBI Taxonomy" id="483179"/>
    <lineage>
        <taxon>Bacteria</taxon>
        <taxon>Pseudomonadati</taxon>
        <taxon>Pseudomonadota</taxon>
        <taxon>Alphaproteobacteria</taxon>
        <taxon>Hyphomicrobiales</taxon>
        <taxon>Brucellaceae</taxon>
        <taxon>Brucella/Ochrobactrum group</taxon>
        <taxon>Brucella</taxon>
    </lineage>
</organism>
<proteinExistence type="inferred from homology"/>
<accession>A9M9R5</accession>